<gene>
    <name evidence="1" type="primary">glgC</name>
    <name type="ordered locus">NFA_47260</name>
</gene>
<sequence>MRSQPHVLGIVLAGGEGKRLFPLTADRAKPAVPFGGAYRLIDFVLSNLVNAGYLRLCVLTQYKSHSLDRHISQTWRLSGFAGEYITPVPAQQRLGPRWYTGSADAIMQSLNLIYDEDPDYIVVFGADHVYRMDPEQMVSHHIDSGAGVTVAGIRVPRSEASAFGCIDSDESGRITQFLEKPAHPPGTPDDPNMTFASMGNYVFTTKVLVDSIRADAENSDSDHDMGGDIIPALVEAGEAGVYDFADNQVPGATDRDHGYWRDVGTIDAFYDAHMDLVSVHPVFNLYNKHWPIRGAAENLPPAKFAQGGLAQECIVGSGSILSAATVRNSVLSSNVVVDDGATVEGSVLMPGVRIGRGAVVRRAILDKNVVVGEGEIIGVDLDRDRERFAVSNGGVVTVGKGVWV</sequence>
<reference key="1">
    <citation type="journal article" date="2004" name="Proc. Natl. Acad. Sci. U.S.A.">
        <title>The complete genomic sequence of Nocardia farcinica IFM 10152.</title>
        <authorList>
            <person name="Ishikawa J."/>
            <person name="Yamashita A."/>
            <person name="Mikami Y."/>
            <person name="Hoshino Y."/>
            <person name="Kurita H."/>
            <person name="Hotta K."/>
            <person name="Shiba T."/>
            <person name="Hattori M."/>
        </authorList>
    </citation>
    <scope>NUCLEOTIDE SEQUENCE [LARGE SCALE GENOMIC DNA]</scope>
    <source>
        <strain>IFM 10152</strain>
    </source>
</reference>
<evidence type="ECO:0000255" key="1">
    <source>
        <dbReference type="HAMAP-Rule" id="MF_00624"/>
    </source>
</evidence>
<protein>
    <recommendedName>
        <fullName evidence="1">Glucose-1-phosphate adenylyltransferase</fullName>
        <ecNumber evidence="1">2.7.7.27</ecNumber>
    </recommendedName>
    <alternativeName>
        <fullName evidence="1">ADP-glucose pyrophosphorylase</fullName>
        <shortName evidence="1">ADPGlc PPase</shortName>
    </alternativeName>
    <alternativeName>
        <fullName evidence="1">ADP-glucose synthase</fullName>
    </alternativeName>
</protein>
<comment type="function">
    <text evidence="1">Involved in the biosynthesis of ADP-glucose, a building block required for the elongation reactions to produce glycogen. Catalyzes the reaction between ATP and alpha-D-glucose 1-phosphate (G1P) to produce pyrophosphate and ADP-Glc.</text>
</comment>
<comment type="catalytic activity">
    <reaction evidence="1">
        <text>alpha-D-glucose 1-phosphate + ATP + H(+) = ADP-alpha-D-glucose + diphosphate</text>
        <dbReference type="Rhea" id="RHEA:12120"/>
        <dbReference type="ChEBI" id="CHEBI:15378"/>
        <dbReference type="ChEBI" id="CHEBI:30616"/>
        <dbReference type="ChEBI" id="CHEBI:33019"/>
        <dbReference type="ChEBI" id="CHEBI:57498"/>
        <dbReference type="ChEBI" id="CHEBI:58601"/>
        <dbReference type="EC" id="2.7.7.27"/>
    </reaction>
</comment>
<comment type="pathway">
    <text evidence="1">Glycan biosynthesis; glycogen biosynthesis.</text>
</comment>
<comment type="subunit">
    <text evidence="1">Homotetramer.</text>
</comment>
<comment type="similarity">
    <text evidence="1">Belongs to the bacterial/plant glucose-1-phosphate adenylyltransferase family.</text>
</comment>
<organism>
    <name type="scientific">Nocardia farcinica (strain IFM 10152)</name>
    <dbReference type="NCBI Taxonomy" id="247156"/>
    <lineage>
        <taxon>Bacteria</taxon>
        <taxon>Bacillati</taxon>
        <taxon>Actinomycetota</taxon>
        <taxon>Actinomycetes</taxon>
        <taxon>Mycobacteriales</taxon>
        <taxon>Nocardiaceae</taxon>
        <taxon>Nocardia</taxon>
    </lineage>
</organism>
<proteinExistence type="inferred from homology"/>
<feature type="chain" id="PRO_0000195312" description="Glucose-1-phosphate adenylyltransferase">
    <location>
        <begin position="1"/>
        <end position="404"/>
    </location>
</feature>
<feature type="binding site" evidence="1">
    <location>
        <position position="99"/>
    </location>
    <ligand>
        <name>alpha-D-glucose 1-phosphate</name>
        <dbReference type="ChEBI" id="CHEBI:58601"/>
    </ligand>
</feature>
<feature type="binding site" evidence="1">
    <location>
        <position position="164"/>
    </location>
    <ligand>
        <name>alpha-D-glucose 1-phosphate</name>
        <dbReference type="ChEBI" id="CHEBI:58601"/>
    </ligand>
</feature>
<feature type="binding site" evidence="1">
    <location>
        <begin position="179"/>
        <end position="180"/>
    </location>
    <ligand>
        <name>alpha-D-glucose 1-phosphate</name>
        <dbReference type="ChEBI" id="CHEBI:58601"/>
    </ligand>
</feature>
<feature type="binding site" evidence="1">
    <location>
        <position position="197"/>
    </location>
    <ligand>
        <name>alpha-D-glucose 1-phosphate</name>
        <dbReference type="ChEBI" id="CHEBI:58601"/>
    </ligand>
</feature>
<keyword id="KW-0067">ATP-binding</keyword>
<keyword id="KW-0119">Carbohydrate metabolism</keyword>
<keyword id="KW-0320">Glycogen biosynthesis</keyword>
<keyword id="KW-0321">Glycogen metabolism</keyword>
<keyword id="KW-0547">Nucleotide-binding</keyword>
<keyword id="KW-0548">Nucleotidyltransferase</keyword>
<keyword id="KW-1185">Reference proteome</keyword>
<keyword id="KW-0808">Transferase</keyword>
<accession>Q5YQG3</accession>
<name>GLGC_NOCFA</name>
<dbReference type="EC" id="2.7.7.27" evidence="1"/>
<dbReference type="EMBL" id="AP006618">
    <property type="protein sequence ID" value="BAD59578.1"/>
    <property type="molecule type" value="Genomic_DNA"/>
</dbReference>
<dbReference type="RefSeq" id="WP_011211262.1">
    <property type="nucleotide sequence ID" value="NC_006361.1"/>
</dbReference>
<dbReference type="SMR" id="Q5YQG3"/>
<dbReference type="STRING" id="247156.NFA_47260"/>
<dbReference type="GeneID" id="61135325"/>
<dbReference type="KEGG" id="nfa:NFA_47260"/>
<dbReference type="eggNOG" id="COG0448">
    <property type="taxonomic scope" value="Bacteria"/>
</dbReference>
<dbReference type="HOGENOM" id="CLU_029499_14_1_11"/>
<dbReference type="OrthoDB" id="9801810at2"/>
<dbReference type="UniPathway" id="UPA00164"/>
<dbReference type="Proteomes" id="UP000006820">
    <property type="component" value="Chromosome"/>
</dbReference>
<dbReference type="GO" id="GO:0005524">
    <property type="term" value="F:ATP binding"/>
    <property type="evidence" value="ECO:0007669"/>
    <property type="project" value="UniProtKB-KW"/>
</dbReference>
<dbReference type="GO" id="GO:0008878">
    <property type="term" value="F:glucose-1-phosphate adenylyltransferase activity"/>
    <property type="evidence" value="ECO:0007669"/>
    <property type="project" value="UniProtKB-UniRule"/>
</dbReference>
<dbReference type="GO" id="GO:0005978">
    <property type="term" value="P:glycogen biosynthetic process"/>
    <property type="evidence" value="ECO:0007669"/>
    <property type="project" value="UniProtKB-UniRule"/>
</dbReference>
<dbReference type="CDD" id="cd02508">
    <property type="entry name" value="ADP_Glucose_PP"/>
    <property type="match status" value="1"/>
</dbReference>
<dbReference type="CDD" id="cd04651">
    <property type="entry name" value="LbH_G1P_AT_C"/>
    <property type="match status" value="1"/>
</dbReference>
<dbReference type="FunFam" id="3.90.550.10:FF:000014">
    <property type="entry name" value="Glucose-1-phosphate adenylyltransferase"/>
    <property type="match status" value="1"/>
</dbReference>
<dbReference type="Gene3D" id="2.160.10.10">
    <property type="entry name" value="Hexapeptide repeat proteins"/>
    <property type="match status" value="1"/>
</dbReference>
<dbReference type="Gene3D" id="3.90.550.10">
    <property type="entry name" value="Spore Coat Polysaccharide Biosynthesis Protein SpsA, Chain A"/>
    <property type="match status" value="1"/>
</dbReference>
<dbReference type="HAMAP" id="MF_00624">
    <property type="entry name" value="GlgC"/>
    <property type="match status" value="1"/>
</dbReference>
<dbReference type="InterPro" id="IPR011831">
    <property type="entry name" value="ADP-Glc_PPase"/>
</dbReference>
<dbReference type="InterPro" id="IPR005836">
    <property type="entry name" value="ADP_Glu_pyroP_CS"/>
</dbReference>
<dbReference type="InterPro" id="IPR023049">
    <property type="entry name" value="GlgC_bac"/>
</dbReference>
<dbReference type="InterPro" id="IPR056818">
    <property type="entry name" value="GlmU/GlgC-like_hexapep"/>
</dbReference>
<dbReference type="InterPro" id="IPR005835">
    <property type="entry name" value="NTP_transferase_dom"/>
</dbReference>
<dbReference type="InterPro" id="IPR029044">
    <property type="entry name" value="Nucleotide-diphossugar_trans"/>
</dbReference>
<dbReference type="InterPro" id="IPR011004">
    <property type="entry name" value="Trimer_LpxA-like_sf"/>
</dbReference>
<dbReference type="NCBIfam" id="TIGR02091">
    <property type="entry name" value="glgC"/>
    <property type="match status" value="1"/>
</dbReference>
<dbReference type="NCBIfam" id="NF001947">
    <property type="entry name" value="PRK00725.1"/>
    <property type="match status" value="1"/>
</dbReference>
<dbReference type="NCBIfam" id="NF002023">
    <property type="entry name" value="PRK00844.1"/>
    <property type="match status" value="1"/>
</dbReference>
<dbReference type="PANTHER" id="PTHR43523:SF2">
    <property type="entry name" value="GLUCOSE-1-PHOSPHATE ADENYLYLTRANSFERASE"/>
    <property type="match status" value="1"/>
</dbReference>
<dbReference type="PANTHER" id="PTHR43523">
    <property type="entry name" value="GLUCOSE-1-PHOSPHATE ADENYLYLTRANSFERASE-RELATED"/>
    <property type="match status" value="1"/>
</dbReference>
<dbReference type="Pfam" id="PF24894">
    <property type="entry name" value="Hexapep_GlmU"/>
    <property type="match status" value="1"/>
</dbReference>
<dbReference type="Pfam" id="PF00483">
    <property type="entry name" value="NTP_transferase"/>
    <property type="match status" value="1"/>
</dbReference>
<dbReference type="SUPFAM" id="SSF53448">
    <property type="entry name" value="Nucleotide-diphospho-sugar transferases"/>
    <property type="match status" value="1"/>
</dbReference>
<dbReference type="SUPFAM" id="SSF51161">
    <property type="entry name" value="Trimeric LpxA-like enzymes"/>
    <property type="match status" value="1"/>
</dbReference>
<dbReference type="PROSITE" id="PS00808">
    <property type="entry name" value="ADP_GLC_PYROPHOSPH_1"/>
    <property type="match status" value="1"/>
</dbReference>
<dbReference type="PROSITE" id="PS00809">
    <property type="entry name" value="ADP_GLC_PYROPHOSPH_2"/>
    <property type="match status" value="1"/>
</dbReference>
<dbReference type="PROSITE" id="PS00810">
    <property type="entry name" value="ADP_GLC_PYROPHOSPH_3"/>
    <property type="match status" value="1"/>
</dbReference>